<dbReference type="EMBL" id="CP000267">
    <property type="protein sequence ID" value="ABD71492.1"/>
    <property type="molecule type" value="Genomic_DNA"/>
</dbReference>
<dbReference type="RefSeq" id="WP_011466055.1">
    <property type="nucleotide sequence ID" value="NC_007908.1"/>
</dbReference>
<dbReference type="SMR" id="Q21RW1"/>
<dbReference type="STRING" id="338969.Rfer_3792"/>
<dbReference type="KEGG" id="rfr:Rfer_3792"/>
<dbReference type="eggNOG" id="COG0090">
    <property type="taxonomic scope" value="Bacteria"/>
</dbReference>
<dbReference type="HOGENOM" id="CLU_036235_2_1_4"/>
<dbReference type="OrthoDB" id="9778722at2"/>
<dbReference type="Proteomes" id="UP000008332">
    <property type="component" value="Chromosome"/>
</dbReference>
<dbReference type="GO" id="GO:0015934">
    <property type="term" value="C:large ribosomal subunit"/>
    <property type="evidence" value="ECO:0007669"/>
    <property type="project" value="InterPro"/>
</dbReference>
<dbReference type="GO" id="GO:0019843">
    <property type="term" value="F:rRNA binding"/>
    <property type="evidence" value="ECO:0007669"/>
    <property type="project" value="UniProtKB-UniRule"/>
</dbReference>
<dbReference type="GO" id="GO:0003735">
    <property type="term" value="F:structural constituent of ribosome"/>
    <property type="evidence" value="ECO:0007669"/>
    <property type="project" value="InterPro"/>
</dbReference>
<dbReference type="GO" id="GO:0016740">
    <property type="term" value="F:transferase activity"/>
    <property type="evidence" value="ECO:0007669"/>
    <property type="project" value="InterPro"/>
</dbReference>
<dbReference type="GO" id="GO:0002181">
    <property type="term" value="P:cytoplasmic translation"/>
    <property type="evidence" value="ECO:0007669"/>
    <property type="project" value="TreeGrafter"/>
</dbReference>
<dbReference type="FunFam" id="2.30.30.30:FF:000001">
    <property type="entry name" value="50S ribosomal protein L2"/>
    <property type="match status" value="1"/>
</dbReference>
<dbReference type="FunFam" id="2.40.50.140:FF:000003">
    <property type="entry name" value="50S ribosomal protein L2"/>
    <property type="match status" value="1"/>
</dbReference>
<dbReference type="FunFam" id="4.10.950.10:FF:000001">
    <property type="entry name" value="50S ribosomal protein L2"/>
    <property type="match status" value="1"/>
</dbReference>
<dbReference type="Gene3D" id="2.30.30.30">
    <property type="match status" value="1"/>
</dbReference>
<dbReference type="Gene3D" id="2.40.50.140">
    <property type="entry name" value="Nucleic acid-binding proteins"/>
    <property type="match status" value="1"/>
</dbReference>
<dbReference type="Gene3D" id="4.10.950.10">
    <property type="entry name" value="Ribosomal protein L2, domain 3"/>
    <property type="match status" value="1"/>
</dbReference>
<dbReference type="HAMAP" id="MF_01320_B">
    <property type="entry name" value="Ribosomal_uL2_B"/>
    <property type="match status" value="1"/>
</dbReference>
<dbReference type="InterPro" id="IPR012340">
    <property type="entry name" value="NA-bd_OB-fold"/>
</dbReference>
<dbReference type="InterPro" id="IPR014722">
    <property type="entry name" value="Rib_uL2_dom2"/>
</dbReference>
<dbReference type="InterPro" id="IPR002171">
    <property type="entry name" value="Ribosomal_uL2"/>
</dbReference>
<dbReference type="InterPro" id="IPR005880">
    <property type="entry name" value="Ribosomal_uL2_bac/org-type"/>
</dbReference>
<dbReference type="InterPro" id="IPR022669">
    <property type="entry name" value="Ribosomal_uL2_C"/>
</dbReference>
<dbReference type="InterPro" id="IPR022671">
    <property type="entry name" value="Ribosomal_uL2_CS"/>
</dbReference>
<dbReference type="InterPro" id="IPR014726">
    <property type="entry name" value="Ribosomal_uL2_dom3"/>
</dbReference>
<dbReference type="InterPro" id="IPR022666">
    <property type="entry name" value="Ribosomal_uL2_RNA-bd_dom"/>
</dbReference>
<dbReference type="InterPro" id="IPR008991">
    <property type="entry name" value="Translation_prot_SH3-like_sf"/>
</dbReference>
<dbReference type="NCBIfam" id="TIGR01171">
    <property type="entry name" value="rplB_bact"/>
    <property type="match status" value="1"/>
</dbReference>
<dbReference type="PANTHER" id="PTHR13691:SF5">
    <property type="entry name" value="LARGE RIBOSOMAL SUBUNIT PROTEIN UL2M"/>
    <property type="match status" value="1"/>
</dbReference>
<dbReference type="PANTHER" id="PTHR13691">
    <property type="entry name" value="RIBOSOMAL PROTEIN L2"/>
    <property type="match status" value="1"/>
</dbReference>
<dbReference type="Pfam" id="PF00181">
    <property type="entry name" value="Ribosomal_L2"/>
    <property type="match status" value="1"/>
</dbReference>
<dbReference type="Pfam" id="PF03947">
    <property type="entry name" value="Ribosomal_L2_C"/>
    <property type="match status" value="1"/>
</dbReference>
<dbReference type="PIRSF" id="PIRSF002158">
    <property type="entry name" value="Ribosomal_L2"/>
    <property type="match status" value="1"/>
</dbReference>
<dbReference type="SMART" id="SM01383">
    <property type="entry name" value="Ribosomal_L2"/>
    <property type="match status" value="1"/>
</dbReference>
<dbReference type="SMART" id="SM01382">
    <property type="entry name" value="Ribosomal_L2_C"/>
    <property type="match status" value="1"/>
</dbReference>
<dbReference type="SUPFAM" id="SSF50249">
    <property type="entry name" value="Nucleic acid-binding proteins"/>
    <property type="match status" value="1"/>
</dbReference>
<dbReference type="SUPFAM" id="SSF50104">
    <property type="entry name" value="Translation proteins SH3-like domain"/>
    <property type="match status" value="1"/>
</dbReference>
<dbReference type="PROSITE" id="PS00467">
    <property type="entry name" value="RIBOSOMAL_L2"/>
    <property type="match status" value="1"/>
</dbReference>
<protein>
    <recommendedName>
        <fullName evidence="1">Large ribosomal subunit protein uL2</fullName>
    </recommendedName>
    <alternativeName>
        <fullName evidence="3">50S ribosomal protein L2</fullName>
    </alternativeName>
</protein>
<proteinExistence type="inferred from homology"/>
<keyword id="KW-1185">Reference proteome</keyword>
<keyword id="KW-0687">Ribonucleoprotein</keyword>
<keyword id="KW-0689">Ribosomal protein</keyword>
<keyword id="KW-0694">RNA-binding</keyword>
<keyword id="KW-0699">rRNA-binding</keyword>
<sequence length="274" mass="30306">MAVIKMKPTSPGRRGVVKISRDHLYKGEPFAPLLEPQFQHAGRNNNGHITTRHKGGGHKHHYRVVDFLRTKDGIPAKVERIEYDPNRSAHIALVCYADGERRYIIAPRGLEVGASIMSGAEAPIRVGNTLPIRNIPVGSIVHCIELQIGKGAQIVRSAGTSATLLAREGIYAQVRMRSGEVRKIHIECRATLGQVANEEHSLRRLGKAGAKRWKGIRPTVRGVVMNPVDHPHGGGEGKTGEGRHPVDPWGNLTKGYRTRNNKRTQVMIVSRRKK</sequence>
<organism>
    <name type="scientific">Albidiferax ferrireducens (strain ATCC BAA-621 / DSM 15236 / T118)</name>
    <name type="common">Rhodoferax ferrireducens</name>
    <dbReference type="NCBI Taxonomy" id="338969"/>
    <lineage>
        <taxon>Bacteria</taxon>
        <taxon>Pseudomonadati</taxon>
        <taxon>Pseudomonadota</taxon>
        <taxon>Betaproteobacteria</taxon>
        <taxon>Burkholderiales</taxon>
        <taxon>Comamonadaceae</taxon>
        <taxon>Rhodoferax</taxon>
    </lineage>
</organism>
<reference key="1">
    <citation type="submission" date="2006-02" db="EMBL/GenBank/DDBJ databases">
        <title>Complete sequence of chromosome of Rhodoferax ferrireducens DSM 15236.</title>
        <authorList>
            <person name="Copeland A."/>
            <person name="Lucas S."/>
            <person name="Lapidus A."/>
            <person name="Barry K."/>
            <person name="Detter J.C."/>
            <person name="Glavina del Rio T."/>
            <person name="Hammon N."/>
            <person name="Israni S."/>
            <person name="Pitluck S."/>
            <person name="Brettin T."/>
            <person name="Bruce D."/>
            <person name="Han C."/>
            <person name="Tapia R."/>
            <person name="Gilna P."/>
            <person name="Kiss H."/>
            <person name="Schmutz J."/>
            <person name="Larimer F."/>
            <person name="Land M."/>
            <person name="Kyrpides N."/>
            <person name="Ivanova N."/>
            <person name="Richardson P."/>
        </authorList>
    </citation>
    <scope>NUCLEOTIDE SEQUENCE [LARGE SCALE GENOMIC DNA]</scope>
    <source>
        <strain>ATCC BAA-621 / DSM 15236 / T118</strain>
    </source>
</reference>
<comment type="function">
    <text evidence="1">One of the primary rRNA binding proteins. Required for association of the 30S and 50S subunits to form the 70S ribosome, for tRNA binding and peptide bond formation. It has been suggested to have peptidyltransferase activity; this is somewhat controversial. Makes several contacts with the 16S rRNA in the 70S ribosome.</text>
</comment>
<comment type="subunit">
    <text evidence="1">Part of the 50S ribosomal subunit. Forms a bridge to the 30S subunit in the 70S ribosome.</text>
</comment>
<comment type="similarity">
    <text evidence="1">Belongs to the universal ribosomal protein uL2 family.</text>
</comment>
<evidence type="ECO:0000255" key="1">
    <source>
        <dbReference type="HAMAP-Rule" id="MF_01320"/>
    </source>
</evidence>
<evidence type="ECO:0000256" key="2">
    <source>
        <dbReference type="SAM" id="MobiDB-lite"/>
    </source>
</evidence>
<evidence type="ECO:0000305" key="3"/>
<feature type="chain" id="PRO_0000309998" description="Large ribosomal subunit protein uL2">
    <location>
        <begin position="1"/>
        <end position="274"/>
    </location>
</feature>
<feature type="region of interest" description="Disordered" evidence="2">
    <location>
        <begin position="223"/>
        <end position="256"/>
    </location>
</feature>
<feature type="compositionally biased region" description="Basic and acidic residues" evidence="2">
    <location>
        <begin position="229"/>
        <end position="246"/>
    </location>
</feature>
<accession>Q21RW1</accession>
<gene>
    <name evidence="1" type="primary">rplB</name>
    <name type="ordered locus">Rfer_3792</name>
</gene>
<name>RL2_ALBFT</name>